<evidence type="ECO:0000250" key="1"/>
<evidence type="ECO:0000255" key="2"/>
<evidence type="ECO:0000269" key="3">
    <source>
    </source>
</evidence>
<evidence type="ECO:0000303" key="4">
    <source>
    </source>
</evidence>
<evidence type="ECO:0000303" key="5">
    <source>
    </source>
</evidence>
<evidence type="ECO:0000303" key="6">
    <source>
    </source>
</evidence>
<evidence type="ECO:0000305" key="7"/>
<feature type="chain" id="PRO_0000263094" description="Sodium/potassium-transporting ATPase subunit beta-1-interacting protein 3">
    <location>
        <begin position="1"/>
        <end position="181"/>
    </location>
</feature>
<feature type="transmembrane region" description="Helical" evidence="2">
    <location>
        <begin position="2"/>
        <end position="22"/>
    </location>
</feature>
<feature type="transmembrane region" description="Helical" evidence="2">
    <location>
        <begin position="35"/>
        <end position="55"/>
    </location>
</feature>
<feature type="transmembrane region" description="Helical" evidence="2">
    <location>
        <begin position="62"/>
        <end position="82"/>
    </location>
</feature>
<feature type="transmembrane region" description="Helical" evidence="2">
    <location>
        <begin position="152"/>
        <end position="172"/>
    </location>
</feature>
<feature type="splice variant" id="VSP_021858" description="In isoform 2." evidence="4 5">
    <original>LVGFVYACYVISISMEEEDTCRNK</original>
    <variation>VRRTKTGLL</variation>
    <location>
        <begin position="158"/>
        <end position="181"/>
    </location>
</feature>
<feature type="splice variant" id="VSP_029300" description="In isoform 3." evidence="6">
    <original>LVGFVYACYVISISMEEEDTCRNK</original>
    <variation>VSHTFESLSDSLLC</variation>
    <location>
        <begin position="158"/>
        <end position="181"/>
    </location>
</feature>
<feature type="sequence conflict" description="In Ref. 2; BAC33916." evidence="7" ref="2">
    <original>C</original>
    <variation>Y</variation>
    <location>
        <position position="12"/>
    </location>
</feature>
<feature type="sequence conflict" description="In Ref. 2; BAC35541." evidence="7" ref="2">
    <original>E</original>
    <variation>G</variation>
    <location>
        <position position="175"/>
    </location>
</feature>
<dbReference type="EMBL" id="EF058052">
    <property type="protein sequence ID" value="ABN51170.1"/>
    <property type="molecule type" value="mRNA"/>
</dbReference>
<dbReference type="EMBL" id="EF058053">
    <property type="protein sequence ID" value="ABN51171.1"/>
    <property type="molecule type" value="mRNA"/>
</dbReference>
<dbReference type="EMBL" id="EF058054">
    <property type="protein sequence ID" value="ABN51172.1"/>
    <property type="molecule type" value="mRNA"/>
</dbReference>
<dbReference type="EMBL" id="AK049776">
    <property type="protein sequence ID" value="BAC33916.1"/>
    <property type="molecule type" value="mRNA"/>
</dbReference>
<dbReference type="EMBL" id="AK053823">
    <property type="protein sequence ID" value="BAC35541.1"/>
    <property type="molecule type" value="mRNA"/>
</dbReference>
<dbReference type="EMBL" id="AK141456">
    <property type="protein sequence ID" value="BAE24690.1"/>
    <property type="molecule type" value="mRNA"/>
</dbReference>
<dbReference type="EMBL" id="AL831710">
    <property type="status" value="NOT_ANNOTATED_CDS"/>
    <property type="molecule type" value="Genomic_DNA"/>
</dbReference>
<dbReference type="EMBL" id="AL928932">
    <property type="status" value="NOT_ANNOTATED_CDS"/>
    <property type="molecule type" value="Genomic_DNA"/>
</dbReference>
<dbReference type="EMBL" id="BX649549">
    <property type="status" value="NOT_ANNOTATED_CDS"/>
    <property type="molecule type" value="Genomic_DNA"/>
</dbReference>
<dbReference type="EMBL" id="BC075683">
    <property type="protein sequence ID" value="AAH75683.1"/>
    <property type="molecule type" value="mRNA"/>
</dbReference>
<dbReference type="CCDS" id="CCDS17997.1">
    <molecule id="Q3URJ8-2"/>
</dbReference>
<dbReference type="CCDS" id="CCDS71349.1">
    <molecule id="Q3URJ8-1"/>
</dbReference>
<dbReference type="RefSeq" id="NP_001277339.1">
    <molecule id="Q3URJ8-1"/>
    <property type="nucleotide sequence ID" value="NM_001290410.1"/>
</dbReference>
<dbReference type="RefSeq" id="NP_766575.2">
    <molecule id="Q3URJ8-2"/>
    <property type="nucleotide sequence ID" value="NM_172987.2"/>
</dbReference>
<dbReference type="SMR" id="Q3URJ8"/>
<dbReference type="FunCoup" id="Q3URJ8">
    <property type="interactions" value="317"/>
</dbReference>
<dbReference type="STRING" id="10090.ENSMUSP00000113113"/>
<dbReference type="GlyGen" id="Q3URJ8">
    <property type="glycosylation" value="1 site, 1 N-linked glycan (1 site)"/>
</dbReference>
<dbReference type="iPTMnet" id="Q3URJ8"/>
<dbReference type="PhosphoSitePlus" id="Q3URJ8"/>
<dbReference type="PaxDb" id="10090-ENSMUSP00000100063"/>
<dbReference type="ProteomicsDB" id="293662">
    <molecule id="Q3URJ8-1"/>
</dbReference>
<dbReference type="ProteomicsDB" id="293663">
    <molecule id="Q3URJ8-2"/>
</dbReference>
<dbReference type="ProteomicsDB" id="293664">
    <molecule id="Q3URJ8-3"/>
</dbReference>
<dbReference type="Antibodypedia" id="63542">
    <property type="antibodies" value="5 antibodies from 5 providers"/>
</dbReference>
<dbReference type="DNASU" id="269513"/>
<dbReference type="Ensembl" id="ENSMUST00000102998.4">
    <molecule id="Q3URJ8-2"/>
    <property type="protein sequence ID" value="ENSMUSP00000100063.4"/>
    <property type="gene ID" value="ENSMUSG00000055761.15"/>
</dbReference>
<dbReference type="Ensembl" id="ENSMUST00000119374.8">
    <molecule id="Q3URJ8-1"/>
    <property type="protein sequence ID" value="ENSMUSP00000113113.2"/>
    <property type="gene ID" value="ENSMUSG00000055761.15"/>
</dbReference>
<dbReference type="GeneID" id="269513"/>
<dbReference type="KEGG" id="mmu:269513"/>
<dbReference type="UCSC" id="uc008scl.1">
    <molecule id="Q3URJ8-1"/>
    <property type="organism name" value="mouse"/>
</dbReference>
<dbReference type="UCSC" id="uc008scm.1">
    <molecule id="Q3URJ8-2"/>
    <property type="organism name" value="mouse"/>
</dbReference>
<dbReference type="UCSC" id="uc008scn.1">
    <molecule id="Q3URJ8-3"/>
    <property type="organism name" value="mouse"/>
</dbReference>
<dbReference type="AGR" id="MGI:2444830"/>
<dbReference type="CTD" id="286183"/>
<dbReference type="MGI" id="MGI:2444830">
    <property type="gene designation" value="Nkain3"/>
</dbReference>
<dbReference type="VEuPathDB" id="HostDB:ENSMUSG00000055761"/>
<dbReference type="eggNOG" id="KOG4556">
    <property type="taxonomic scope" value="Eukaryota"/>
</dbReference>
<dbReference type="GeneTree" id="ENSGT00940000161484"/>
<dbReference type="HOGENOM" id="CLU_090781_0_1_1"/>
<dbReference type="InParanoid" id="Q3URJ8"/>
<dbReference type="OMA" id="TALWITW"/>
<dbReference type="OrthoDB" id="10050321at2759"/>
<dbReference type="PhylomeDB" id="Q3URJ8"/>
<dbReference type="TreeFam" id="TF321348"/>
<dbReference type="BioGRID-ORCS" id="269513">
    <property type="hits" value="2 hits in 76 CRISPR screens"/>
</dbReference>
<dbReference type="ChiTaRS" id="Nkain3">
    <property type="organism name" value="mouse"/>
</dbReference>
<dbReference type="PRO" id="PR:Q3URJ8"/>
<dbReference type="Proteomes" id="UP000000589">
    <property type="component" value="Chromosome 4"/>
</dbReference>
<dbReference type="RNAct" id="Q3URJ8">
    <property type="molecule type" value="protein"/>
</dbReference>
<dbReference type="Bgee" id="ENSMUSG00000055761">
    <property type="expression patterns" value="Expressed in dorsal root ganglion and 46 other cell types or tissues"/>
</dbReference>
<dbReference type="GO" id="GO:0016020">
    <property type="term" value="C:membrane"/>
    <property type="evidence" value="ECO:0000314"/>
    <property type="project" value="MGI"/>
</dbReference>
<dbReference type="GO" id="GO:0005886">
    <property type="term" value="C:plasma membrane"/>
    <property type="evidence" value="ECO:0007669"/>
    <property type="project" value="UniProtKB-SubCell"/>
</dbReference>
<dbReference type="InterPro" id="IPR008516">
    <property type="entry name" value="Na/K-Atpase_Interacting"/>
</dbReference>
<dbReference type="PANTHER" id="PTHR13084:SF2">
    <property type="entry name" value="SODIUM_POTASSIUM-TRANSPORTING ATPASE SUBUNIT BETA-1-INTERACTING PROTEIN 3"/>
    <property type="match status" value="1"/>
</dbReference>
<dbReference type="PANTHER" id="PTHR13084">
    <property type="entry name" value="T-CELL LYMPHOMA BREAKPOINT-ASSOCIATED TARGET 1-RELATED"/>
    <property type="match status" value="1"/>
</dbReference>
<dbReference type="Pfam" id="PF05640">
    <property type="entry name" value="NKAIN"/>
    <property type="match status" value="1"/>
</dbReference>
<keyword id="KW-0025">Alternative splicing</keyword>
<keyword id="KW-1003">Cell membrane</keyword>
<keyword id="KW-0472">Membrane</keyword>
<keyword id="KW-1185">Reference proteome</keyword>
<keyword id="KW-0812">Transmembrane</keyword>
<keyword id="KW-1133">Transmembrane helix</keyword>
<protein>
    <recommendedName>
        <fullName>Sodium/potassium-transporting ATPase subunit beta-1-interacting protein 3</fullName>
        <shortName>Na(+)/K(+)-transporting ATPase subunit beta-1-interacting protein 3</shortName>
    </recommendedName>
    <alternativeName>
        <fullName>Protein FAM77D</fullName>
    </alternativeName>
</protein>
<accession>Q3URJ8</accession>
<accession>A2ANL4</accession>
<accession>A6MHP8</accession>
<accession>A6MHQ0</accession>
<accession>Q6DI91</accession>
<accession>Q8BPL2</accession>
<accession>Q8C7P6</accession>
<comment type="subunit">
    <text evidence="1">Interacts with ATP1B1.</text>
</comment>
<comment type="subcellular location">
    <subcellularLocation>
        <location evidence="7">Cell membrane</location>
        <topology evidence="7">Multi-pass membrane protein</topology>
    </subcellularLocation>
</comment>
<comment type="alternative products">
    <event type="alternative splicing"/>
    <isoform>
        <id>Q3URJ8-1</id>
        <name>1</name>
        <name>Transcript variant 1</name>
        <sequence type="displayed"/>
    </isoform>
    <isoform>
        <id>Q3URJ8-2</id>
        <name>2</name>
        <name>Transcript variant 2</name>
        <sequence type="described" ref="VSP_021858"/>
    </isoform>
    <isoform>
        <id>Q3URJ8-3</id>
        <name>3</name>
        <name>Transcript variant 3</name>
        <sequence type="described" ref="VSP_029300"/>
    </isoform>
</comment>
<comment type="tissue specificity">
    <text evidence="3">Detected in the brain only and specifically in neurons. Expressed in multiple regions such as cerebral cortex, thalamus, hippocampus, olfactory bulb and brainstem as well as in cerebellum with low expression in granular cell layer.</text>
</comment>
<comment type="similarity">
    <text evidence="7">Belongs to the NKAIN family.</text>
</comment>
<gene>
    <name type="primary">Nkain3</name>
    <name type="synonym">Fam77d</name>
</gene>
<sequence length="181" mass="20700">MGCCTGRCSLVCLCALQLLSALERQIFDFLGFQWAPILGNFLHIIVVILGLFGTIQYRPRYIMVYTVWTALWVTWNVFIICFYLEVGGLSKDTDLMTFNISVHRSWWREHGPGCVRRVLPPSAHGMMDDYTYVSVTGCVVDFQYLEVIHSAVQILLSLVGFVYACYVISISMEEEDTCRNK</sequence>
<reference key="1">
    <citation type="journal article" date="2007" name="Hum. Mol. Genet.">
        <title>A novel family of transmembrane proteins interacting with beta subunits of the Na,K-ATPase.</title>
        <authorList>
            <person name="Gorokhova S."/>
            <person name="Bibert S."/>
            <person name="Geering K."/>
            <person name="Heintz N."/>
        </authorList>
    </citation>
    <scope>NUCLEOTIDE SEQUENCE [MRNA] (ISOFORMS 1 AND 3)</scope>
    <scope>TISSUE SPECIFICITY</scope>
    <source>
        <strain>C57BL/6J</strain>
    </source>
</reference>
<reference key="2">
    <citation type="journal article" date="2005" name="Science">
        <title>The transcriptional landscape of the mammalian genome.</title>
        <authorList>
            <person name="Carninci P."/>
            <person name="Kasukawa T."/>
            <person name="Katayama S."/>
            <person name="Gough J."/>
            <person name="Frith M.C."/>
            <person name="Maeda N."/>
            <person name="Oyama R."/>
            <person name="Ravasi T."/>
            <person name="Lenhard B."/>
            <person name="Wells C."/>
            <person name="Kodzius R."/>
            <person name="Shimokawa K."/>
            <person name="Bajic V.B."/>
            <person name="Brenner S.E."/>
            <person name="Batalov S."/>
            <person name="Forrest A.R."/>
            <person name="Zavolan M."/>
            <person name="Davis M.J."/>
            <person name="Wilming L.G."/>
            <person name="Aidinis V."/>
            <person name="Allen J.E."/>
            <person name="Ambesi-Impiombato A."/>
            <person name="Apweiler R."/>
            <person name="Aturaliya R.N."/>
            <person name="Bailey T.L."/>
            <person name="Bansal M."/>
            <person name="Baxter L."/>
            <person name="Beisel K.W."/>
            <person name="Bersano T."/>
            <person name="Bono H."/>
            <person name="Chalk A.M."/>
            <person name="Chiu K.P."/>
            <person name="Choudhary V."/>
            <person name="Christoffels A."/>
            <person name="Clutterbuck D.R."/>
            <person name="Crowe M.L."/>
            <person name="Dalla E."/>
            <person name="Dalrymple B.P."/>
            <person name="de Bono B."/>
            <person name="Della Gatta G."/>
            <person name="di Bernardo D."/>
            <person name="Down T."/>
            <person name="Engstrom P."/>
            <person name="Fagiolini M."/>
            <person name="Faulkner G."/>
            <person name="Fletcher C.F."/>
            <person name="Fukushima T."/>
            <person name="Furuno M."/>
            <person name="Futaki S."/>
            <person name="Gariboldi M."/>
            <person name="Georgii-Hemming P."/>
            <person name="Gingeras T.R."/>
            <person name="Gojobori T."/>
            <person name="Green R.E."/>
            <person name="Gustincich S."/>
            <person name="Harbers M."/>
            <person name="Hayashi Y."/>
            <person name="Hensch T.K."/>
            <person name="Hirokawa N."/>
            <person name="Hill D."/>
            <person name="Huminiecki L."/>
            <person name="Iacono M."/>
            <person name="Ikeo K."/>
            <person name="Iwama A."/>
            <person name="Ishikawa T."/>
            <person name="Jakt M."/>
            <person name="Kanapin A."/>
            <person name="Katoh M."/>
            <person name="Kawasawa Y."/>
            <person name="Kelso J."/>
            <person name="Kitamura H."/>
            <person name="Kitano H."/>
            <person name="Kollias G."/>
            <person name="Krishnan S.P."/>
            <person name="Kruger A."/>
            <person name="Kummerfeld S.K."/>
            <person name="Kurochkin I.V."/>
            <person name="Lareau L.F."/>
            <person name="Lazarevic D."/>
            <person name="Lipovich L."/>
            <person name="Liu J."/>
            <person name="Liuni S."/>
            <person name="McWilliam S."/>
            <person name="Madan Babu M."/>
            <person name="Madera M."/>
            <person name="Marchionni L."/>
            <person name="Matsuda H."/>
            <person name="Matsuzawa S."/>
            <person name="Miki H."/>
            <person name="Mignone F."/>
            <person name="Miyake S."/>
            <person name="Morris K."/>
            <person name="Mottagui-Tabar S."/>
            <person name="Mulder N."/>
            <person name="Nakano N."/>
            <person name="Nakauchi H."/>
            <person name="Ng P."/>
            <person name="Nilsson R."/>
            <person name="Nishiguchi S."/>
            <person name="Nishikawa S."/>
            <person name="Nori F."/>
            <person name="Ohara O."/>
            <person name="Okazaki Y."/>
            <person name="Orlando V."/>
            <person name="Pang K.C."/>
            <person name="Pavan W.J."/>
            <person name="Pavesi G."/>
            <person name="Pesole G."/>
            <person name="Petrovsky N."/>
            <person name="Piazza S."/>
            <person name="Reed J."/>
            <person name="Reid J.F."/>
            <person name="Ring B.Z."/>
            <person name="Ringwald M."/>
            <person name="Rost B."/>
            <person name="Ruan Y."/>
            <person name="Salzberg S.L."/>
            <person name="Sandelin A."/>
            <person name="Schneider C."/>
            <person name="Schoenbach C."/>
            <person name="Sekiguchi K."/>
            <person name="Semple C.A."/>
            <person name="Seno S."/>
            <person name="Sessa L."/>
            <person name="Sheng Y."/>
            <person name="Shibata Y."/>
            <person name="Shimada H."/>
            <person name="Shimada K."/>
            <person name="Silva D."/>
            <person name="Sinclair B."/>
            <person name="Sperling S."/>
            <person name="Stupka E."/>
            <person name="Sugiura K."/>
            <person name="Sultana R."/>
            <person name="Takenaka Y."/>
            <person name="Taki K."/>
            <person name="Tammoja K."/>
            <person name="Tan S.L."/>
            <person name="Tang S."/>
            <person name="Taylor M.S."/>
            <person name="Tegner J."/>
            <person name="Teichmann S.A."/>
            <person name="Ueda H.R."/>
            <person name="van Nimwegen E."/>
            <person name="Verardo R."/>
            <person name="Wei C.L."/>
            <person name="Yagi K."/>
            <person name="Yamanishi H."/>
            <person name="Zabarovsky E."/>
            <person name="Zhu S."/>
            <person name="Zimmer A."/>
            <person name="Hide W."/>
            <person name="Bult C."/>
            <person name="Grimmond S.M."/>
            <person name="Teasdale R.D."/>
            <person name="Liu E.T."/>
            <person name="Brusic V."/>
            <person name="Quackenbush J."/>
            <person name="Wahlestedt C."/>
            <person name="Mattick J.S."/>
            <person name="Hume D.A."/>
            <person name="Kai C."/>
            <person name="Sasaki D."/>
            <person name="Tomaru Y."/>
            <person name="Fukuda S."/>
            <person name="Kanamori-Katayama M."/>
            <person name="Suzuki M."/>
            <person name="Aoki J."/>
            <person name="Arakawa T."/>
            <person name="Iida J."/>
            <person name="Imamura K."/>
            <person name="Itoh M."/>
            <person name="Kato T."/>
            <person name="Kawaji H."/>
            <person name="Kawagashira N."/>
            <person name="Kawashima T."/>
            <person name="Kojima M."/>
            <person name="Kondo S."/>
            <person name="Konno H."/>
            <person name="Nakano K."/>
            <person name="Ninomiya N."/>
            <person name="Nishio T."/>
            <person name="Okada M."/>
            <person name="Plessy C."/>
            <person name="Shibata K."/>
            <person name="Shiraki T."/>
            <person name="Suzuki S."/>
            <person name="Tagami M."/>
            <person name="Waki K."/>
            <person name="Watahiki A."/>
            <person name="Okamura-Oho Y."/>
            <person name="Suzuki H."/>
            <person name="Kawai J."/>
            <person name="Hayashizaki Y."/>
        </authorList>
    </citation>
    <scope>NUCLEOTIDE SEQUENCE [LARGE SCALE MRNA] (ISOFORMS 1 AND 2)</scope>
    <source>
        <strain>C57BL/6J</strain>
        <tissue>Eye</tissue>
        <tissue>Spinal cord</tissue>
    </source>
</reference>
<reference key="3">
    <citation type="journal article" date="2009" name="PLoS Biol.">
        <title>Lineage-specific biology revealed by a finished genome assembly of the mouse.</title>
        <authorList>
            <person name="Church D.M."/>
            <person name="Goodstadt L."/>
            <person name="Hillier L.W."/>
            <person name="Zody M.C."/>
            <person name="Goldstein S."/>
            <person name="She X."/>
            <person name="Bult C.J."/>
            <person name="Agarwala R."/>
            <person name="Cherry J.L."/>
            <person name="DiCuccio M."/>
            <person name="Hlavina W."/>
            <person name="Kapustin Y."/>
            <person name="Meric P."/>
            <person name="Maglott D."/>
            <person name="Birtle Z."/>
            <person name="Marques A.C."/>
            <person name="Graves T."/>
            <person name="Zhou S."/>
            <person name="Teague B."/>
            <person name="Potamousis K."/>
            <person name="Churas C."/>
            <person name="Place M."/>
            <person name="Herschleb J."/>
            <person name="Runnheim R."/>
            <person name="Forrest D."/>
            <person name="Amos-Landgraf J."/>
            <person name="Schwartz D.C."/>
            <person name="Cheng Z."/>
            <person name="Lindblad-Toh K."/>
            <person name="Eichler E.E."/>
            <person name="Ponting C.P."/>
        </authorList>
    </citation>
    <scope>NUCLEOTIDE SEQUENCE [LARGE SCALE GENOMIC DNA]</scope>
    <source>
        <strain>C57BL/6J</strain>
    </source>
</reference>
<reference key="4">
    <citation type="journal article" date="2004" name="Genome Res.">
        <title>The status, quality, and expansion of the NIH full-length cDNA project: the Mammalian Gene Collection (MGC).</title>
        <authorList>
            <consortium name="The MGC Project Team"/>
        </authorList>
    </citation>
    <scope>NUCLEOTIDE SEQUENCE [LARGE SCALE MRNA] (ISOFORM 2)</scope>
    <source>
        <strain>C57BL/6J</strain>
        <tissue>Eye</tissue>
    </source>
</reference>
<organism>
    <name type="scientific">Mus musculus</name>
    <name type="common">Mouse</name>
    <dbReference type="NCBI Taxonomy" id="10090"/>
    <lineage>
        <taxon>Eukaryota</taxon>
        <taxon>Metazoa</taxon>
        <taxon>Chordata</taxon>
        <taxon>Craniata</taxon>
        <taxon>Vertebrata</taxon>
        <taxon>Euteleostomi</taxon>
        <taxon>Mammalia</taxon>
        <taxon>Eutheria</taxon>
        <taxon>Euarchontoglires</taxon>
        <taxon>Glires</taxon>
        <taxon>Rodentia</taxon>
        <taxon>Myomorpha</taxon>
        <taxon>Muroidea</taxon>
        <taxon>Muridae</taxon>
        <taxon>Murinae</taxon>
        <taxon>Mus</taxon>
        <taxon>Mus</taxon>
    </lineage>
</organism>
<name>NKAI3_MOUSE</name>
<proteinExistence type="evidence at transcript level"/>